<comment type="function">
    <text evidence="1">ATP-dependent RNA helicase required for 60S ribosomal subunit synthesis. Involved in efficient pre-rRNA processing, predominantly at site A3, which is necessary for the normal formation of 25S and 5.8S rRNAs (By similarity).</text>
</comment>
<comment type="catalytic activity">
    <reaction>
        <text>ATP + H2O = ADP + phosphate + H(+)</text>
        <dbReference type="Rhea" id="RHEA:13065"/>
        <dbReference type="ChEBI" id="CHEBI:15377"/>
        <dbReference type="ChEBI" id="CHEBI:15378"/>
        <dbReference type="ChEBI" id="CHEBI:30616"/>
        <dbReference type="ChEBI" id="CHEBI:43474"/>
        <dbReference type="ChEBI" id="CHEBI:456216"/>
        <dbReference type="EC" id="3.6.4.13"/>
    </reaction>
</comment>
<comment type="subcellular location">
    <subcellularLocation>
        <location evidence="1">Nucleus</location>
        <location evidence="1">Nucleolus</location>
    </subcellularLocation>
</comment>
<comment type="domain">
    <text>The Q motif is unique to and characteristic of the DEAD box family of RNA helicases and controls ATP binding and hydrolysis.</text>
</comment>
<comment type="similarity">
    <text evidence="5">Belongs to the DEAD box helicase family. DDX5/DBP2 subfamily.</text>
</comment>
<sequence length="487" mass="53950">MAKRSRNMESNSERSSRPKKKSKGDAKPEQPPYVQSAELDAVPQSEIDDFLKSNTIQISDPSIKETLRPITAFSYLPSDSNQLYGPLEHFSKPTPIQSVTWPYLFAGRDVIGVAETGSGKTLAFGVPCIRKVLEINASHSSFRISAVIITPTRELAMQIHDQLVKFTPNGVGLACIYGGASKDDQRRALKKASVIVATPGRLKDFHSDESLNLKKVKYLVLDEADRMLDKGFEQDIKDIVSAMPSSRKRQTVMFTATWPISVRKLATTFMKEPVTVTIGGDLSSDIRANTRIKQIVEVVKPENKESRLLSLLNQYQRGRNAMDKVLVFCLYKKEATRIERFIRSKGFKVAGIHGDMNQTERFNSLDAFKSGSVPVLVATDVAARGLDIPAVKLVLNVTFPLTVEDYVHRIGRTGRAGSDGLAITMFTENDKALSGGLVNILKGANQDIPEALLKFGTTVKKKQHDSYGAFFREADTMKTATKIKFDD</sequence>
<feature type="chain" id="PRO_0000310191" description="ATP-dependent RNA helicase DBP3">
    <location>
        <begin position="1"/>
        <end position="487"/>
    </location>
</feature>
<feature type="domain" description="Helicase ATP-binding" evidence="2">
    <location>
        <begin position="101"/>
        <end position="276"/>
    </location>
</feature>
<feature type="domain" description="Helicase C-terminal" evidence="3">
    <location>
        <begin position="291"/>
        <end position="456"/>
    </location>
</feature>
<feature type="region of interest" description="Disordered" evidence="4">
    <location>
        <begin position="1"/>
        <end position="40"/>
    </location>
</feature>
<feature type="short sequence motif" description="Q motif">
    <location>
        <begin position="71"/>
        <end position="98"/>
    </location>
</feature>
<feature type="short sequence motif" description="DEAD box">
    <location>
        <begin position="222"/>
        <end position="225"/>
    </location>
</feature>
<feature type="binding site" evidence="2">
    <location>
        <begin position="114"/>
        <end position="121"/>
    </location>
    <ligand>
        <name>ATP</name>
        <dbReference type="ChEBI" id="CHEBI:30616"/>
    </ligand>
</feature>
<name>DBP3_AJECN</name>
<protein>
    <recommendedName>
        <fullName>ATP-dependent RNA helicase DBP3</fullName>
        <ecNumber>3.6.4.13</ecNumber>
    </recommendedName>
</protein>
<accession>A6QXC1</accession>
<gene>
    <name type="primary">DBP3</name>
    <name type="ORF">HCAG_02028</name>
</gene>
<proteinExistence type="inferred from homology"/>
<evidence type="ECO:0000250" key="1"/>
<evidence type="ECO:0000255" key="2">
    <source>
        <dbReference type="PROSITE-ProRule" id="PRU00541"/>
    </source>
</evidence>
<evidence type="ECO:0000255" key="3">
    <source>
        <dbReference type="PROSITE-ProRule" id="PRU00542"/>
    </source>
</evidence>
<evidence type="ECO:0000256" key="4">
    <source>
        <dbReference type="SAM" id="MobiDB-lite"/>
    </source>
</evidence>
<evidence type="ECO:0000305" key="5"/>
<keyword id="KW-0067">ATP-binding</keyword>
<keyword id="KW-0347">Helicase</keyword>
<keyword id="KW-0378">Hydrolase</keyword>
<keyword id="KW-0547">Nucleotide-binding</keyword>
<keyword id="KW-0539">Nucleus</keyword>
<keyword id="KW-1185">Reference proteome</keyword>
<keyword id="KW-0690">Ribosome biogenesis</keyword>
<keyword id="KW-0694">RNA-binding</keyword>
<keyword id="KW-0698">rRNA processing</keyword>
<reference key="1">
    <citation type="journal article" date="2009" name="Genome Res.">
        <title>Comparative genomic analyses of the human fungal pathogens Coccidioides and their relatives.</title>
        <authorList>
            <person name="Sharpton T.J."/>
            <person name="Stajich J.E."/>
            <person name="Rounsley S.D."/>
            <person name="Gardner M.J."/>
            <person name="Wortman J.R."/>
            <person name="Jordar V.S."/>
            <person name="Maiti R."/>
            <person name="Kodira C.D."/>
            <person name="Neafsey D.E."/>
            <person name="Zeng Q."/>
            <person name="Hung C.-Y."/>
            <person name="McMahan C."/>
            <person name="Muszewska A."/>
            <person name="Grynberg M."/>
            <person name="Mandel M.A."/>
            <person name="Kellner E.M."/>
            <person name="Barker B.M."/>
            <person name="Galgiani J.N."/>
            <person name="Orbach M.J."/>
            <person name="Kirkland T.N."/>
            <person name="Cole G.T."/>
            <person name="Henn M.R."/>
            <person name="Birren B.W."/>
            <person name="Taylor J.W."/>
        </authorList>
    </citation>
    <scope>NUCLEOTIDE SEQUENCE [LARGE SCALE GENOMIC DNA]</scope>
    <source>
        <strain>NAm1 / WU24</strain>
    </source>
</reference>
<dbReference type="EC" id="3.6.4.13"/>
<dbReference type="EMBL" id="CH476655">
    <property type="protein sequence ID" value="EDN04163.1"/>
    <property type="molecule type" value="Genomic_DNA"/>
</dbReference>
<dbReference type="SMR" id="A6QXC1"/>
<dbReference type="STRING" id="339724.A6QXC1"/>
<dbReference type="KEGG" id="aje:HCAG_02028"/>
<dbReference type="VEuPathDB" id="FungiDB:HCAG_02028"/>
<dbReference type="HOGENOM" id="CLU_003041_1_5_1"/>
<dbReference type="OMA" id="RGKNAMD"/>
<dbReference type="OrthoDB" id="3440at299071"/>
<dbReference type="Proteomes" id="UP000009297">
    <property type="component" value="Unassembled WGS sequence"/>
</dbReference>
<dbReference type="GO" id="GO:0005730">
    <property type="term" value="C:nucleolus"/>
    <property type="evidence" value="ECO:0007669"/>
    <property type="project" value="UniProtKB-SubCell"/>
</dbReference>
<dbReference type="GO" id="GO:0005524">
    <property type="term" value="F:ATP binding"/>
    <property type="evidence" value="ECO:0007669"/>
    <property type="project" value="UniProtKB-KW"/>
</dbReference>
<dbReference type="GO" id="GO:0016887">
    <property type="term" value="F:ATP hydrolysis activity"/>
    <property type="evidence" value="ECO:0007669"/>
    <property type="project" value="RHEA"/>
</dbReference>
<dbReference type="GO" id="GO:0003723">
    <property type="term" value="F:RNA binding"/>
    <property type="evidence" value="ECO:0007669"/>
    <property type="project" value="UniProtKB-KW"/>
</dbReference>
<dbReference type="GO" id="GO:0003724">
    <property type="term" value="F:RNA helicase activity"/>
    <property type="evidence" value="ECO:0007669"/>
    <property type="project" value="UniProtKB-EC"/>
</dbReference>
<dbReference type="GO" id="GO:0006364">
    <property type="term" value="P:rRNA processing"/>
    <property type="evidence" value="ECO:0007669"/>
    <property type="project" value="UniProtKB-KW"/>
</dbReference>
<dbReference type="CDD" id="cd00268">
    <property type="entry name" value="DEADc"/>
    <property type="match status" value="1"/>
</dbReference>
<dbReference type="CDD" id="cd18787">
    <property type="entry name" value="SF2_C_DEAD"/>
    <property type="match status" value="1"/>
</dbReference>
<dbReference type="FunFam" id="3.40.50.300:FF:000008">
    <property type="entry name" value="ATP-dependent RNA helicase RhlB"/>
    <property type="match status" value="1"/>
</dbReference>
<dbReference type="Gene3D" id="3.40.50.300">
    <property type="entry name" value="P-loop containing nucleotide triphosphate hydrolases"/>
    <property type="match status" value="2"/>
</dbReference>
<dbReference type="InterPro" id="IPR011545">
    <property type="entry name" value="DEAD/DEAH_box_helicase_dom"/>
</dbReference>
<dbReference type="InterPro" id="IPR014001">
    <property type="entry name" value="Helicase_ATP-bd"/>
</dbReference>
<dbReference type="InterPro" id="IPR001650">
    <property type="entry name" value="Helicase_C-like"/>
</dbReference>
<dbReference type="InterPro" id="IPR027417">
    <property type="entry name" value="P-loop_NTPase"/>
</dbReference>
<dbReference type="InterPro" id="IPR000629">
    <property type="entry name" value="RNA-helicase_DEAD-box_CS"/>
</dbReference>
<dbReference type="PANTHER" id="PTHR47958">
    <property type="entry name" value="ATP-DEPENDENT RNA HELICASE DBP3"/>
    <property type="match status" value="1"/>
</dbReference>
<dbReference type="Pfam" id="PF00270">
    <property type="entry name" value="DEAD"/>
    <property type="match status" value="1"/>
</dbReference>
<dbReference type="Pfam" id="PF00271">
    <property type="entry name" value="Helicase_C"/>
    <property type="match status" value="1"/>
</dbReference>
<dbReference type="SMART" id="SM00487">
    <property type="entry name" value="DEXDc"/>
    <property type="match status" value="1"/>
</dbReference>
<dbReference type="SMART" id="SM00490">
    <property type="entry name" value="HELICc"/>
    <property type="match status" value="1"/>
</dbReference>
<dbReference type="SUPFAM" id="SSF52540">
    <property type="entry name" value="P-loop containing nucleoside triphosphate hydrolases"/>
    <property type="match status" value="1"/>
</dbReference>
<dbReference type="PROSITE" id="PS00039">
    <property type="entry name" value="DEAD_ATP_HELICASE"/>
    <property type="match status" value="1"/>
</dbReference>
<dbReference type="PROSITE" id="PS51192">
    <property type="entry name" value="HELICASE_ATP_BIND_1"/>
    <property type="match status" value="1"/>
</dbReference>
<dbReference type="PROSITE" id="PS51194">
    <property type="entry name" value="HELICASE_CTER"/>
    <property type="match status" value="1"/>
</dbReference>
<dbReference type="PROSITE" id="PS51195">
    <property type="entry name" value="Q_MOTIF"/>
    <property type="match status" value="1"/>
</dbReference>
<organism>
    <name type="scientific">Ajellomyces capsulatus (strain NAm1 / WU24)</name>
    <name type="common">Darling's disease fungus</name>
    <name type="synonym">Histoplasma capsulatum</name>
    <dbReference type="NCBI Taxonomy" id="2059318"/>
    <lineage>
        <taxon>Eukaryota</taxon>
        <taxon>Fungi</taxon>
        <taxon>Dikarya</taxon>
        <taxon>Ascomycota</taxon>
        <taxon>Pezizomycotina</taxon>
        <taxon>Eurotiomycetes</taxon>
        <taxon>Eurotiomycetidae</taxon>
        <taxon>Onygenales</taxon>
        <taxon>Ajellomycetaceae</taxon>
        <taxon>Histoplasma</taxon>
    </lineage>
</organism>